<evidence type="ECO:0000250" key="1">
    <source>
        <dbReference type="UniProtKB" id="P53612"/>
    </source>
</evidence>
<evidence type="ECO:0000250" key="2">
    <source>
        <dbReference type="UniProtKB" id="Q08603"/>
    </source>
</evidence>
<evidence type="ECO:0000269" key="3">
    <source>
    </source>
</evidence>
<evidence type="ECO:0000269" key="4">
    <source>
    </source>
</evidence>
<evidence type="ECO:0000269" key="5">
    <source>
    </source>
</evidence>
<evidence type="ECO:0000269" key="6">
    <source>
    </source>
</evidence>
<evidence type="ECO:0000305" key="7"/>
<evidence type="ECO:0007744" key="8">
    <source>
    </source>
</evidence>
<evidence type="ECO:0007744" key="9">
    <source>
    </source>
</evidence>
<evidence type="ECO:0007744" key="10">
    <source>
    </source>
</evidence>
<evidence type="ECO:0007744" key="11">
    <source>
    </source>
</evidence>
<evidence type="ECO:0007829" key="12">
    <source>
        <dbReference type="PDB" id="6J6X"/>
    </source>
</evidence>
<evidence type="ECO:0007829" key="13">
    <source>
        <dbReference type="PDB" id="6J74"/>
    </source>
</evidence>
<evidence type="ECO:0007829" key="14">
    <source>
        <dbReference type="PDB" id="6J7X"/>
    </source>
</evidence>
<evidence type="ECO:0007829" key="15">
    <source>
        <dbReference type="PDB" id="6O60"/>
    </source>
</evidence>
<reference key="1">
    <citation type="submission" date="1996-03" db="EMBL/GenBank/DDBJ databases">
        <authorList>
            <person name="Chang H.Y."/>
            <person name="Wu S.R."/>
            <person name="Peng H.L."/>
        </authorList>
    </citation>
    <scope>NUCLEOTIDE SEQUENCE [MRNA]</scope>
    <source>
        <tissue>Brain</tissue>
    </source>
</reference>
<reference key="2">
    <citation type="journal article" date="1996" name="Eur. J. Biochem.">
        <title>Characterization of the interaction of the monomeric GTP-binding protein Rab3a with geranylgeranyl transferase II.</title>
        <authorList>
            <person name="Johannes L."/>
            <person name="Perez F."/>
            <person name="Laran-Chich M.P."/>
            <person name="Henry J.P."/>
            <person name="Darchen F."/>
        </authorList>
    </citation>
    <scope>NUCLEOTIDE SEQUENCE [MRNA]</scope>
    <source>
        <tissue>Brain</tissue>
    </source>
</reference>
<reference key="3">
    <citation type="journal article" date="1996" name="Genomics">
        <title>cDNA cloning and chromosomal localization of the genes encoding the alpha- and beta-subunits of human Rab geranylgeranyl transferase: the 3' end of the alpha-subunit gene overlaps with the transglutaminase 1 gene promoter.</title>
        <authorList>
            <person name="van Bokhoven H."/>
            <person name="Rawson R.B."/>
            <person name="Merkx G.F.M."/>
            <person name="Cremers F.P.M."/>
            <person name="Seabra M.C."/>
        </authorList>
    </citation>
    <scope>NUCLEOTIDE SEQUENCE [MRNA]</scope>
    <source>
        <tissue>Fetal brain</tissue>
    </source>
</reference>
<reference key="4">
    <citation type="journal article" date="2004" name="Genome Res.">
        <title>The status, quality, and expansion of the NIH full-length cDNA project: the Mammalian Gene Collection (MGC).</title>
        <authorList>
            <consortium name="The MGC Project Team"/>
        </authorList>
    </citation>
    <scope>NUCLEOTIDE SEQUENCE [LARGE SCALE MRNA]</scope>
    <source>
        <tissue>Skeletal muscle</tissue>
    </source>
</reference>
<reference key="5">
    <citation type="journal article" date="2001" name="J. Biol. Chem.">
        <title>Interaction of farnesylated PRL-2, a protein-tyrosine phosphatase, with the beta-subunit of geranylgeranyltransferase II.</title>
        <authorList>
            <person name="Si X."/>
            <person name="Zeng Q."/>
            <person name="Ng C.H."/>
            <person name="Hong W."/>
            <person name="Pallen C.J."/>
        </authorList>
    </citation>
    <scope>INTERACTION WITH PTP4A2</scope>
</reference>
<reference key="6">
    <citation type="journal article" date="1994" name="Proc. Natl. Acad. Sci. U.S.A.">
        <title>Rab geranylgeranyl transferase catalyzes the geranylgeranylation of adjacent cysteines in the small GTPases Rab1A, Rab3A, and Rab5A.</title>
        <authorList>
            <person name="Farnsworth C.C."/>
            <person name="Seabra M.C."/>
            <person name="Ericsson L.H."/>
            <person name="Gelb M.H."/>
            <person name="Glomset J.A."/>
        </authorList>
    </citation>
    <scope>FUNCTION</scope>
    <scope>CATALYTIC ACTIVITY</scope>
</reference>
<reference key="7">
    <citation type="journal article" date="2008" name="Biochem. J.">
        <title>Rab geranylgeranylation occurs preferentially via the pre-formed REP-RGGT complex and is regulated by geranylgeranyl pyrophosphate.</title>
        <authorList>
            <person name="Baron R.A."/>
            <person name="Seabra M.C."/>
        </authorList>
    </citation>
    <scope>SUBUNIT</scope>
    <scope>ACTIVITY REGULATION</scope>
</reference>
<reference key="8">
    <citation type="journal article" date="2008" name="Mol. Cell">
        <title>Kinase-selective enrichment enables quantitative phosphoproteomics of the kinome across the cell cycle.</title>
        <authorList>
            <person name="Daub H."/>
            <person name="Olsen J.V."/>
            <person name="Bairlein M."/>
            <person name="Gnad F."/>
            <person name="Oppermann F.S."/>
            <person name="Korner R."/>
            <person name="Greff Z."/>
            <person name="Keri G."/>
            <person name="Stemmann O."/>
            <person name="Mann M."/>
        </authorList>
    </citation>
    <scope>PHOSPHORYLATION [LARGE SCALE ANALYSIS] AT THR-3</scope>
    <scope>IDENTIFICATION BY MASS SPECTROMETRY [LARGE SCALE ANALYSIS]</scope>
    <source>
        <tissue>Cervix carcinoma</tissue>
    </source>
</reference>
<reference key="9">
    <citation type="journal article" date="2008" name="Proc. Natl. Acad. Sci. U.S.A.">
        <title>A quantitative atlas of mitotic phosphorylation.</title>
        <authorList>
            <person name="Dephoure N."/>
            <person name="Zhou C."/>
            <person name="Villen J."/>
            <person name="Beausoleil S.A."/>
            <person name="Bakalarski C.E."/>
            <person name="Elledge S.J."/>
            <person name="Gygi S.P."/>
        </authorList>
    </citation>
    <scope>IDENTIFICATION BY MASS SPECTROMETRY [LARGE SCALE ANALYSIS]</scope>
    <source>
        <tissue>Cervix carcinoma</tissue>
    </source>
</reference>
<reference key="10">
    <citation type="journal article" date="2009" name="Anal. Chem.">
        <title>Lys-N and trypsin cover complementary parts of the phosphoproteome in a refined SCX-based approach.</title>
        <authorList>
            <person name="Gauci S."/>
            <person name="Helbig A.O."/>
            <person name="Slijper M."/>
            <person name="Krijgsveld J."/>
            <person name="Heck A.J."/>
            <person name="Mohammed S."/>
        </authorList>
    </citation>
    <scope>ACETYLATION [LARGE SCALE ANALYSIS] AT GLY-2</scope>
    <scope>CLEAVAGE OF INITIATOR METHIONINE [LARGE SCALE ANALYSIS]</scope>
    <scope>IDENTIFICATION BY MASS SPECTROMETRY [LARGE SCALE ANALYSIS]</scope>
</reference>
<reference key="11">
    <citation type="journal article" date="2010" name="Sci. Signal.">
        <title>Quantitative phosphoproteomics reveals widespread full phosphorylation site occupancy during mitosis.</title>
        <authorList>
            <person name="Olsen J.V."/>
            <person name="Vermeulen M."/>
            <person name="Santamaria A."/>
            <person name="Kumar C."/>
            <person name="Miller M.L."/>
            <person name="Jensen L.J."/>
            <person name="Gnad F."/>
            <person name="Cox J."/>
            <person name="Jensen T.S."/>
            <person name="Nigg E.A."/>
            <person name="Brunak S."/>
            <person name="Mann M."/>
        </authorList>
    </citation>
    <scope>ACETYLATION [LARGE SCALE ANALYSIS] AT GLY-2</scope>
    <scope>PHOSPHORYLATION [LARGE SCALE ANALYSIS] AT THR-3</scope>
    <scope>CLEAVAGE OF INITIATOR METHIONINE [LARGE SCALE ANALYSIS]</scope>
    <scope>IDENTIFICATION BY MASS SPECTROMETRY [LARGE SCALE ANALYSIS]</scope>
    <source>
        <tissue>Cervix carcinoma</tissue>
    </source>
</reference>
<reference key="12">
    <citation type="journal article" date="2011" name="BMC Syst. Biol.">
        <title>Initial characterization of the human central proteome.</title>
        <authorList>
            <person name="Burkard T.R."/>
            <person name="Planyavsky M."/>
            <person name="Kaupe I."/>
            <person name="Breitwieser F.P."/>
            <person name="Buerckstuemmer T."/>
            <person name="Bennett K.L."/>
            <person name="Superti-Furga G."/>
            <person name="Colinge J."/>
        </authorList>
    </citation>
    <scope>IDENTIFICATION BY MASS SPECTROMETRY [LARGE SCALE ANALYSIS]</scope>
</reference>
<reference key="13">
    <citation type="journal article" date="2013" name="J. Proteome Res.">
        <title>Toward a comprehensive characterization of a human cancer cell phosphoproteome.</title>
        <authorList>
            <person name="Zhou H."/>
            <person name="Di Palma S."/>
            <person name="Preisinger C."/>
            <person name="Peng M."/>
            <person name="Polat A.N."/>
            <person name="Heck A.J."/>
            <person name="Mohammed S."/>
        </authorList>
    </citation>
    <scope>PHOSPHORYLATION [LARGE SCALE ANALYSIS] AT THR-3</scope>
    <scope>IDENTIFICATION BY MASS SPECTROMETRY [LARGE SCALE ANALYSIS]</scope>
    <source>
        <tissue>Cervix carcinoma</tissue>
        <tissue>Erythroleukemia</tissue>
    </source>
</reference>
<reference key="14">
    <citation type="journal article" date="2016" name="Elife">
        <title>Phosphoproteomics reveals that Parkinson's disease kinase LRRK2 regulates a subset of Rab GTPases.</title>
        <authorList>
            <person name="Steger M."/>
            <person name="Tonelli F."/>
            <person name="Ito G."/>
            <person name="Davies P."/>
            <person name="Trost M."/>
            <person name="Vetter M."/>
            <person name="Wachter S."/>
            <person name="Lorentzen E."/>
            <person name="Duddy G."/>
            <person name="Wilson S."/>
            <person name="Baptista M.A."/>
            <person name="Fiske B.K."/>
            <person name="Fell M.J."/>
            <person name="Morrow J.A."/>
            <person name="Reith A.D."/>
            <person name="Alessi D.R."/>
            <person name="Mann M."/>
        </authorList>
    </citation>
    <scope>IDENTIFICATION BY MASS SPECTROMETRY</scope>
    <scope>INTERACTION WITH RAB8A</scope>
</reference>
<dbReference type="EC" id="2.5.1.60" evidence="6"/>
<dbReference type="EMBL" id="U49245">
    <property type="protein sequence ID" value="AAA91473.1"/>
    <property type="molecule type" value="mRNA"/>
</dbReference>
<dbReference type="EMBL" id="X98001">
    <property type="protein sequence ID" value="CAA66638.1"/>
    <property type="molecule type" value="mRNA"/>
</dbReference>
<dbReference type="EMBL" id="Y08201">
    <property type="protein sequence ID" value="CAA69383.1"/>
    <property type="molecule type" value="mRNA"/>
</dbReference>
<dbReference type="EMBL" id="BC020790">
    <property type="protein sequence ID" value="AAH20790.1"/>
    <property type="molecule type" value="mRNA"/>
</dbReference>
<dbReference type="CCDS" id="CCDS669.1"/>
<dbReference type="PIR" id="G02431">
    <property type="entry name" value="G02431"/>
</dbReference>
<dbReference type="RefSeq" id="NP_004573.2">
    <property type="nucleotide sequence ID" value="NM_004582.3"/>
</dbReference>
<dbReference type="PDB" id="6J6X">
    <property type="method" value="X-ray"/>
    <property type="resolution" value="2.96 A"/>
    <property type="chains" value="B=1-331"/>
</dbReference>
<dbReference type="PDB" id="6J74">
    <property type="method" value="X-ray"/>
    <property type="resolution" value="3.21 A"/>
    <property type="chains" value="B=1-331"/>
</dbReference>
<dbReference type="PDB" id="6J7F">
    <property type="method" value="X-ray"/>
    <property type="resolution" value="2.88 A"/>
    <property type="chains" value="B=1-331"/>
</dbReference>
<dbReference type="PDB" id="6J7X">
    <property type="method" value="X-ray"/>
    <property type="resolution" value="2.75 A"/>
    <property type="chains" value="B=1-331"/>
</dbReference>
<dbReference type="PDB" id="6O60">
    <property type="method" value="X-ray"/>
    <property type="resolution" value="2.50 A"/>
    <property type="chains" value="B=1-331"/>
</dbReference>
<dbReference type="PDBsum" id="6J6X"/>
<dbReference type="PDBsum" id="6J74"/>
<dbReference type="PDBsum" id="6J7F"/>
<dbReference type="PDBsum" id="6J7X"/>
<dbReference type="PDBsum" id="6O60"/>
<dbReference type="SMR" id="P53611"/>
<dbReference type="BioGRID" id="111814">
    <property type="interactions" value="103"/>
</dbReference>
<dbReference type="ComplexPortal" id="CPX-2919">
    <property type="entry name" value="Protein geranylgeranyltransferase type II complex"/>
</dbReference>
<dbReference type="FunCoup" id="P53611">
    <property type="interactions" value="1139"/>
</dbReference>
<dbReference type="IntAct" id="P53611">
    <property type="interactions" value="69"/>
</dbReference>
<dbReference type="MINT" id="P53611"/>
<dbReference type="STRING" id="9606.ENSP00000317473"/>
<dbReference type="ChEMBL" id="CHEMBL4523994"/>
<dbReference type="DrugBank" id="DB07780">
    <property type="generic name" value="Farnesyl diphosphate"/>
</dbReference>
<dbReference type="DrugBank" id="DB07841">
    <property type="generic name" value="Geranylgeranyl diphosphate"/>
</dbReference>
<dbReference type="DrugBank" id="DB04464">
    <property type="generic name" value="N-Formylmethionine"/>
</dbReference>
<dbReference type="GlyGen" id="P53611">
    <property type="glycosylation" value="1 site, 1 O-linked glycan (1 site)"/>
</dbReference>
<dbReference type="iPTMnet" id="P53611"/>
<dbReference type="PhosphoSitePlus" id="P53611"/>
<dbReference type="BioMuta" id="RABGGTB"/>
<dbReference type="DMDM" id="2506788"/>
<dbReference type="jPOST" id="P53611"/>
<dbReference type="MassIVE" id="P53611"/>
<dbReference type="PaxDb" id="9606-ENSP00000317473"/>
<dbReference type="PeptideAtlas" id="P53611"/>
<dbReference type="ProteomicsDB" id="56591"/>
<dbReference type="Pumba" id="P53611"/>
<dbReference type="Antibodypedia" id="19716">
    <property type="antibodies" value="72 antibodies from 23 providers"/>
</dbReference>
<dbReference type="DNASU" id="5876"/>
<dbReference type="Ensembl" id="ENST00000319942.8">
    <property type="protein sequence ID" value="ENSP00000317473.3"/>
    <property type="gene ID" value="ENSG00000137955.16"/>
</dbReference>
<dbReference type="GeneID" id="5876"/>
<dbReference type="KEGG" id="hsa:5876"/>
<dbReference type="MANE-Select" id="ENST00000319942.8">
    <property type="protein sequence ID" value="ENSP00000317473.3"/>
    <property type="RefSeq nucleotide sequence ID" value="NM_004582.4"/>
    <property type="RefSeq protein sequence ID" value="NP_004573.2"/>
</dbReference>
<dbReference type="AGR" id="HGNC:9796"/>
<dbReference type="CTD" id="5876"/>
<dbReference type="DisGeNET" id="5876"/>
<dbReference type="GeneCards" id="RABGGTB"/>
<dbReference type="HGNC" id="HGNC:9796">
    <property type="gene designation" value="RABGGTB"/>
</dbReference>
<dbReference type="HPA" id="ENSG00000137955">
    <property type="expression patterns" value="Low tissue specificity"/>
</dbReference>
<dbReference type="MIM" id="179080">
    <property type="type" value="gene"/>
</dbReference>
<dbReference type="neXtProt" id="NX_P53611"/>
<dbReference type="OpenTargets" id="ENSG00000137955"/>
<dbReference type="PharmGKB" id="PA34157"/>
<dbReference type="VEuPathDB" id="HostDB:ENSG00000137955"/>
<dbReference type="eggNOG" id="KOG0366">
    <property type="taxonomic scope" value="Eukaryota"/>
</dbReference>
<dbReference type="GeneTree" id="ENSGT00950000183128"/>
<dbReference type="HOGENOM" id="CLU_028946_3_0_1"/>
<dbReference type="InParanoid" id="P53611"/>
<dbReference type="OMA" id="VKRCQCP"/>
<dbReference type="OrthoDB" id="5428259at2759"/>
<dbReference type="PAN-GO" id="P53611">
    <property type="GO annotations" value="3 GO annotations based on evolutionary models"/>
</dbReference>
<dbReference type="PhylomeDB" id="P53611"/>
<dbReference type="TreeFam" id="TF105762"/>
<dbReference type="BRENDA" id="2.5.1.60">
    <property type="organism ID" value="2681"/>
</dbReference>
<dbReference type="PathwayCommons" id="P53611"/>
<dbReference type="Reactome" id="R-HSA-6803205">
    <property type="pathway name" value="TP53 regulates transcription of several additional cell death genes whose specific roles in p53-dependent apoptosis remain uncertain"/>
</dbReference>
<dbReference type="Reactome" id="R-HSA-8873719">
    <property type="pathway name" value="RAB geranylgeranylation"/>
</dbReference>
<dbReference type="SignaLink" id="P53611"/>
<dbReference type="SIGNOR" id="P53611"/>
<dbReference type="BioGRID-ORCS" id="5876">
    <property type="hits" value="827 hits in 1159 CRISPR screens"/>
</dbReference>
<dbReference type="ChiTaRS" id="RABGGTB">
    <property type="organism name" value="human"/>
</dbReference>
<dbReference type="GenomeRNAi" id="5876"/>
<dbReference type="Pharos" id="P53611">
    <property type="development level" value="Tbio"/>
</dbReference>
<dbReference type="PRO" id="PR:P53611"/>
<dbReference type="Proteomes" id="UP000005640">
    <property type="component" value="Chromosome 1"/>
</dbReference>
<dbReference type="RNAct" id="P53611">
    <property type="molecule type" value="protein"/>
</dbReference>
<dbReference type="Bgee" id="ENSG00000137955">
    <property type="expression patterns" value="Expressed in secondary oocyte and 211 other cell types or tissues"/>
</dbReference>
<dbReference type="ExpressionAtlas" id="P53611">
    <property type="expression patterns" value="baseline and differential"/>
</dbReference>
<dbReference type="GO" id="GO:0005829">
    <property type="term" value="C:cytosol"/>
    <property type="evidence" value="ECO:0000304"/>
    <property type="project" value="Reactome"/>
</dbReference>
<dbReference type="GO" id="GO:0005886">
    <property type="term" value="C:plasma membrane"/>
    <property type="evidence" value="ECO:0000304"/>
    <property type="project" value="Reactome"/>
</dbReference>
<dbReference type="GO" id="GO:0005968">
    <property type="term" value="C:Rab-protein geranylgeranyltransferase complex"/>
    <property type="evidence" value="ECO:0000250"/>
    <property type="project" value="UniProtKB"/>
</dbReference>
<dbReference type="GO" id="GO:0004663">
    <property type="term" value="F:Rab geranylgeranyltransferase activity"/>
    <property type="evidence" value="ECO:0000250"/>
    <property type="project" value="UniProtKB"/>
</dbReference>
<dbReference type="GO" id="GO:0031267">
    <property type="term" value="F:small GTPase binding"/>
    <property type="evidence" value="ECO:0000250"/>
    <property type="project" value="UniProtKB"/>
</dbReference>
<dbReference type="GO" id="GO:0008270">
    <property type="term" value="F:zinc ion binding"/>
    <property type="evidence" value="ECO:0000250"/>
    <property type="project" value="UniProtKB"/>
</dbReference>
<dbReference type="GO" id="GO:0006888">
    <property type="term" value="P:endoplasmic reticulum to Golgi vesicle-mediated transport"/>
    <property type="evidence" value="ECO:0000318"/>
    <property type="project" value="GO_Central"/>
</dbReference>
<dbReference type="GO" id="GO:0018344">
    <property type="term" value="P:protein geranylgeranylation"/>
    <property type="evidence" value="ECO:0000250"/>
    <property type="project" value="UniProtKB"/>
</dbReference>
<dbReference type="GO" id="GO:0036211">
    <property type="term" value="P:protein modification process"/>
    <property type="evidence" value="ECO:0000303"/>
    <property type="project" value="UniProtKB"/>
</dbReference>
<dbReference type="GO" id="GO:0007601">
    <property type="term" value="P:visual perception"/>
    <property type="evidence" value="ECO:0000304"/>
    <property type="project" value="ProtInc"/>
</dbReference>
<dbReference type="CDD" id="cd02894">
    <property type="entry name" value="GGTase-II"/>
    <property type="match status" value="1"/>
</dbReference>
<dbReference type="FunFam" id="1.50.10.20:FF:000004">
    <property type="entry name" value="Geranylgeranyl transferase type-2 subunit beta"/>
    <property type="match status" value="1"/>
</dbReference>
<dbReference type="Gene3D" id="1.50.10.20">
    <property type="match status" value="1"/>
</dbReference>
<dbReference type="InterPro" id="IPR045089">
    <property type="entry name" value="PGGT1B-like"/>
</dbReference>
<dbReference type="InterPro" id="IPR001330">
    <property type="entry name" value="Prenyltrans"/>
</dbReference>
<dbReference type="InterPro" id="IPR026873">
    <property type="entry name" value="Ptb1"/>
</dbReference>
<dbReference type="InterPro" id="IPR008930">
    <property type="entry name" value="Terpenoid_cyclase/PrenylTrfase"/>
</dbReference>
<dbReference type="PANTHER" id="PTHR11774">
    <property type="entry name" value="GERANYLGERANYL TRANSFERASE TYPE BETA SUBUNIT"/>
    <property type="match status" value="1"/>
</dbReference>
<dbReference type="PANTHER" id="PTHR11774:SF11">
    <property type="entry name" value="GERANYLGERANYL TRANSFERASE TYPE-2 SUBUNIT BETA"/>
    <property type="match status" value="1"/>
</dbReference>
<dbReference type="Pfam" id="PF00432">
    <property type="entry name" value="Prenyltrans"/>
    <property type="match status" value="1"/>
</dbReference>
<dbReference type="SUPFAM" id="SSF48239">
    <property type="entry name" value="Terpenoid cyclases/Protein prenyltransferases"/>
    <property type="match status" value="1"/>
</dbReference>
<gene>
    <name type="primary">RABGGTB</name>
    <name type="synonym">GGTB</name>
</gene>
<name>PGTB2_HUMAN</name>
<keyword id="KW-0002">3D-structure</keyword>
<keyword id="KW-0007">Acetylation</keyword>
<keyword id="KW-0479">Metal-binding</keyword>
<keyword id="KW-0597">Phosphoprotein</keyword>
<keyword id="KW-0637">Prenyltransferase</keyword>
<keyword id="KW-1267">Proteomics identification</keyword>
<keyword id="KW-1185">Reference proteome</keyword>
<keyword id="KW-0677">Repeat</keyword>
<keyword id="KW-0808">Transferase</keyword>
<keyword id="KW-0862">Zinc</keyword>
<comment type="function">
    <text evidence="6">Catalyzes the transfer of a geranylgeranyl moiety from geranylgeranyl diphosphate to both cysteines of Rab proteins with the C-terminal sequence -XXCC, -XCXC and -CCXX, such as RAB1A, RAB3A, RAB5A and RAB7A.</text>
</comment>
<comment type="catalytic activity">
    <reaction evidence="6">
        <text>geranylgeranyl diphosphate + L-cysteinyl-[protein] = S-geranylgeranyl-L-cysteinyl-[protein] + diphosphate</text>
        <dbReference type="Rhea" id="RHEA:21240"/>
        <dbReference type="Rhea" id="RHEA-COMP:10131"/>
        <dbReference type="Rhea" id="RHEA-COMP:11537"/>
        <dbReference type="ChEBI" id="CHEBI:29950"/>
        <dbReference type="ChEBI" id="CHEBI:33019"/>
        <dbReference type="ChEBI" id="CHEBI:57533"/>
        <dbReference type="ChEBI" id="CHEBI:86021"/>
        <dbReference type="EC" id="2.5.1.60"/>
    </reaction>
</comment>
<comment type="cofactor">
    <cofactor evidence="2">
        <name>Zn(2+)</name>
        <dbReference type="ChEBI" id="CHEBI:29105"/>
    </cofactor>
    <text evidence="2">Binds 1 zinc ion per subunit.</text>
</comment>
<comment type="activity regulation">
    <text evidence="4">The enzymatic reaction requires the aid of a Rab escort protein (also called component A).</text>
</comment>
<comment type="subunit">
    <text evidence="1 3 4 5">Heterotrimer composed of RABGGTA, RABGGTB and CHM; within this trimer, RABGGTA and RABGGTB form the catalytic component B, while CHM (component A) mediates peptide substrate binding (PubMed:18532927). The Rab GGTase dimer (RGGT) interacts with CHM (component A) prior to Rab protein binding; the association is stabilized by geranylgeranyl pyrophosphate (GGpp) (PubMed:18532927). The CHM:RGGT:Rab complex is destabilized by GGpp (PubMed:18532927). Interaction of RABGGTB with prenylated PTP4A2 precludes its association with RABGGTA and inhibits enzyme activity (PubMed:11447212). Interacts with CHODL (By similarity). Interacts with non-phosphorylated form of RAB8A; phosphorylation of RAB8A at 'Thr-72' disrupts this interaction (PubMed:26824392).</text>
</comment>
<comment type="interaction">
    <interactant intactId="EBI-536715">
        <id>P53611</id>
    </interactant>
    <interactant intactId="EBI-365961">
        <id>P10398</id>
        <label>ARAF</label>
    </interactant>
    <organismsDiffer>false</organismsDiffer>
    <experiments>3</experiments>
</comment>
<comment type="interaction">
    <interactant intactId="EBI-536715">
        <id>P53611</id>
    </interactant>
    <interactant intactId="EBI-10319970">
        <id>Q9UBV7</id>
        <label>B4GALT7</label>
    </interactant>
    <organismsDiffer>false</organismsDiffer>
    <experiments>6</experiments>
</comment>
<comment type="interaction">
    <interactant intactId="EBI-536715">
        <id>P53611</id>
    </interactant>
    <interactant intactId="EBI-947015">
        <id>P24592</id>
        <label>IGFBP6</label>
    </interactant>
    <organismsDiffer>false</organismsDiffer>
    <experiments>3</experiments>
</comment>
<comment type="interaction">
    <interactant intactId="EBI-536715">
        <id>P53611</id>
    </interactant>
    <interactant intactId="EBI-9104196">
        <id>Q92696</id>
        <label>RABGGTA</label>
    </interactant>
    <organismsDiffer>false</organismsDiffer>
    <experiments>8</experiments>
</comment>
<comment type="interaction">
    <interactant intactId="EBI-536715">
        <id>P53611</id>
    </interactant>
    <interactant intactId="EBI-10257895">
        <id>Q7Z5A9</id>
        <label>TAFA1</label>
    </interactant>
    <organismsDiffer>false</organismsDiffer>
    <experiments>3</experiments>
</comment>
<comment type="interaction">
    <interactant intactId="EBI-536715">
        <id>P53611</id>
    </interactant>
    <interactant intactId="EBI-10260688">
        <id>Q86YD3</id>
        <label>TMEM25</label>
    </interactant>
    <organismsDiffer>false</organismsDiffer>
    <experiments>3</experiments>
</comment>
<comment type="interaction">
    <interactant intactId="EBI-536715">
        <id>P53611</id>
    </interactant>
    <interactant intactId="EBI-750427">
        <id>P57081</id>
        <label>WDR4</label>
    </interactant>
    <organismsDiffer>false</organismsDiffer>
    <experiments>6</experiments>
</comment>
<comment type="similarity">
    <text evidence="7">Belongs to the protein prenyltransferase subunit beta family.</text>
</comment>
<comment type="online information" name="Wikipedia">
    <link uri="https://en.wikipedia.org/wiki/Rab_geranylgeranyltransferase"/>
    <text>Rab geranylgeranyltransferase entry</text>
</comment>
<protein>
    <recommendedName>
        <fullName>Geranylgeranyl transferase type-2 subunit beta</fullName>
        <ecNumber evidence="6">2.5.1.60</ecNumber>
    </recommendedName>
    <alternativeName>
        <fullName>Geranylgeranyl transferase type II subunit beta</fullName>
        <shortName>GGTase-II-beta</shortName>
    </alternativeName>
    <alternativeName>
        <fullName>Rab geranyl-geranyltransferase subunit beta</fullName>
        <shortName>Rab GG transferase beta</shortName>
        <shortName>Rab GGTase beta</shortName>
    </alternativeName>
    <alternativeName>
        <fullName>Rab geranylgeranyltransferase subunit beta</fullName>
    </alternativeName>
    <alternativeName>
        <fullName>Type II protein geranyl-geranyltransferase subunit beta</fullName>
    </alternativeName>
</protein>
<organism>
    <name type="scientific">Homo sapiens</name>
    <name type="common">Human</name>
    <dbReference type="NCBI Taxonomy" id="9606"/>
    <lineage>
        <taxon>Eukaryota</taxon>
        <taxon>Metazoa</taxon>
        <taxon>Chordata</taxon>
        <taxon>Craniata</taxon>
        <taxon>Vertebrata</taxon>
        <taxon>Euteleostomi</taxon>
        <taxon>Mammalia</taxon>
        <taxon>Eutheria</taxon>
        <taxon>Euarchontoglires</taxon>
        <taxon>Primates</taxon>
        <taxon>Haplorrhini</taxon>
        <taxon>Catarrhini</taxon>
        <taxon>Hominidae</taxon>
        <taxon>Homo</taxon>
    </lineage>
</organism>
<sequence length="331" mass="36924">MGTPQKDVIIKSDAPDTLLLEKHADYIASYGSKKDDYEYCMSEYLRMSGIYWGLTVMDLMGQLHRMNREEILAFIKSCQHECGGISASIGHDPHLLYTLSAVQILTLYDSINVIDVNKVVEYVKGLQKEDGSFAGDIWGEIDTRFSFCAVATLALLGKLDAINVEKAIEFVLSCMNFDGGFGCRPGSESHAGQIYCCTGFLAITSQLHQVNSDLLGWWLCERQLPSGGLNGRPEKLPDVCYSWWVLASLKIIGRLHWIDREKLRNFILACQDEETGGFADRPGDMVDPFHTLFGIAGLSLLGEEQIKPVNPVFCMPEEVLQRVNVQPELVS</sequence>
<proteinExistence type="evidence at protein level"/>
<accession>P53611</accession>
<accession>Q92697</accession>
<feature type="initiator methionine" description="Removed" evidence="9 10">
    <location>
        <position position="1"/>
    </location>
</feature>
<feature type="chain" id="PRO_0000119772" description="Geranylgeranyl transferase type-2 subunit beta">
    <location>
        <begin position="2"/>
        <end position="331"/>
    </location>
</feature>
<feature type="repeat" description="PFTB 1">
    <location>
        <begin position="20"/>
        <end position="61"/>
    </location>
</feature>
<feature type="repeat" description="PFTB 2">
    <location>
        <begin position="68"/>
        <end position="109"/>
    </location>
</feature>
<feature type="repeat" description="PFTB 3">
    <location>
        <begin position="116"/>
        <end position="157"/>
    </location>
</feature>
<feature type="repeat" description="PFTB 4">
    <location>
        <begin position="164"/>
        <end position="205"/>
    </location>
</feature>
<feature type="repeat" description="PFTB 5">
    <location>
        <begin position="212"/>
        <end position="253"/>
    </location>
</feature>
<feature type="repeat" description="PFTB 6">
    <location>
        <begin position="260"/>
        <end position="302"/>
    </location>
</feature>
<feature type="binding site" evidence="2">
    <location>
        <begin position="190"/>
        <end position="192"/>
    </location>
    <ligand>
        <name>geranylgeranyl diphosphate</name>
        <dbReference type="ChEBI" id="CHEBI:57533"/>
    </ligand>
</feature>
<feature type="binding site" evidence="2">
    <location>
        <position position="238"/>
    </location>
    <ligand>
        <name>Zn(2+)</name>
        <dbReference type="ChEBI" id="CHEBI:29105"/>
        <note>catalytic</note>
    </ligand>
</feature>
<feature type="binding site" evidence="2">
    <location>
        <position position="240"/>
    </location>
    <ligand>
        <name>Zn(2+)</name>
        <dbReference type="ChEBI" id="CHEBI:29105"/>
        <note>catalytic</note>
    </ligand>
</feature>
<feature type="binding site" evidence="2">
    <location>
        <begin position="241"/>
        <end position="244"/>
    </location>
    <ligand>
        <name>geranylgeranyl diphosphate</name>
        <dbReference type="ChEBI" id="CHEBI:57533"/>
    </ligand>
</feature>
<feature type="binding site" evidence="2">
    <location>
        <position position="290"/>
    </location>
    <ligand>
        <name>Zn(2+)</name>
        <dbReference type="ChEBI" id="CHEBI:29105"/>
        <note>catalytic</note>
    </ligand>
</feature>
<feature type="modified residue" description="N-acetylglycine" evidence="9 10">
    <location>
        <position position="2"/>
    </location>
</feature>
<feature type="modified residue" description="Phosphothreonine" evidence="8 10 11">
    <location>
        <position position="3"/>
    </location>
</feature>
<feature type="sequence conflict" description="In Ref. 1; AAA91473." evidence="7" ref="1">
    <original>L</original>
    <variation>F</variation>
    <location>
        <position position="153"/>
    </location>
</feature>
<feature type="sequence conflict" description="In Ref. 3; CAA69383." evidence="7" ref="3">
    <original>F</original>
    <variation>S</variation>
    <location>
        <position position="177"/>
    </location>
</feature>
<feature type="sequence conflict" description="In Ref. 3; CAA69383." evidence="7" ref="3">
    <original>N</original>
    <variation>T</variation>
    <location>
        <position position="211"/>
    </location>
</feature>
<feature type="strand" evidence="14">
    <location>
        <begin position="12"/>
        <end position="14"/>
    </location>
</feature>
<feature type="helix" evidence="15">
    <location>
        <begin position="20"/>
        <end position="29"/>
    </location>
</feature>
<feature type="helix" evidence="15">
    <location>
        <begin position="37"/>
        <end position="42"/>
    </location>
</feature>
<feature type="helix" evidence="15">
    <location>
        <begin position="43"/>
        <end position="45"/>
    </location>
</feature>
<feature type="helix" evidence="15">
    <location>
        <begin position="46"/>
        <end position="59"/>
    </location>
</feature>
<feature type="helix" evidence="15">
    <location>
        <begin position="63"/>
        <end position="65"/>
    </location>
</feature>
<feature type="helix" evidence="15">
    <location>
        <begin position="68"/>
        <end position="76"/>
    </location>
</feature>
<feature type="strand" evidence="14">
    <location>
        <begin position="85"/>
        <end position="88"/>
    </location>
</feature>
<feature type="helix" evidence="15">
    <location>
        <begin position="95"/>
        <end position="107"/>
    </location>
</feature>
<feature type="helix" evidence="15">
    <location>
        <begin position="111"/>
        <end position="113"/>
    </location>
</feature>
<feature type="helix" evidence="15">
    <location>
        <begin position="116"/>
        <end position="125"/>
    </location>
</feature>
<feature type="strand" evidence="13">
    <location>
        <begin position="129"/>
        <end position="131"/>
    </location>
</feature>
<feature type="strand" evidence="15">
    <location>
        <begin position="133"/>
        <end position="136"/>
    </location>
</feature>
<feature type="helix" evidence="15">
    <location>
        <begin position="143"/>
        <end position="156"/>
    </location>
</feature>
<feature type="helix" evidence="15">
    <location>
        <begin position="159"/>
        <end position="161"/>
    </location>
</feature>
<feature type="helix" evidence="15">
    <location>
        <begin position="164"/>
        <end position="172"/>
    </location>
</feature>
<feature type="strand" evidence="13">
    <location>
        <begin position="177"/>
        <end position="179"/>
    </location>
</feature>
<feature type="helix" evidence="15">
    <location>
        <begin position="191"/>
        <end position="203"/>
    </location>
</feature>
<feature type="helix" evidence="15">
    <location>
        <begin position="207"/>
        <end position="209"/>
    </location>
</feature>
<feature type="helix" evidence="15">
    <location>
        <begin position="212"/>
        <end position="220"/>
    </location>
</feature>
<feature type="helix" evidence="15">
    <location>
        <begin position="239"/>
        <end position="251"/>
    </location>
</feature>
<feature type="helix" evidence="15">
    <location>
        <begin position="255"/>
        <end position="257"/>
    </location>
</feature>
<feature type="helix" evidence="15">
    <location>
        <begin position="260"/>
        <end position="269"/>
    </location>
</feature>
<feature type="turn" evidence="15">
    <location>
        <begin position="273"/>
        <end position="275"/>
    </location>
</feature>
<feature type="strand" evidence="15">
    <location>
        <begin position="278"/>
        <end position="281"/>
    </location>
</feature>
<feature type="helix" evidence="15">
    <location>
        <begin position="288"/>
        <end position="301"/>
    </location>
</feature>
<feature type="strand" evidence="12">
    <location>
        <begin position="304"/>
        <end position="306"/>
    </location>
</feature>
<feature type="turn" evidence="15">
    <location>
        <begin position="311"/>
        <end position="313"/>
    </location>
</feature>
<feature type="strand" evidence="15">
    <location>
        <begin position="314"/>
        <end position="316"/>
    </location>
</feature>
<feature type="helix" evidence="15">
    <location>
        <begin position="317"/>
        <end position="324"/>
    </location>
</feature>